<sequence>MAPQTKRAAETPKLGVQKAAVIAAAFLSAITAGAMANISMISVPVFMDTNTNPNHMIAQWSRTYHYGHIILPGICVGTCGLYAFSALRSNKNWRRYALAGITTLSLVPFTWVFMTPTNNTLFALEAAGNVSDLGYVQQLVVKWTWLHATRSMFPLIGAILGFTGIMADLER</sequence>
<proteinExistence type="inferred from homology"/>
<gene>
    <name evidence="5" type="primary">dmxR16</name>
</gene>
<feature type="chain" id="PRO_0000453438" description="Anthrone oxygenase dmxR16">
    <location>
        <begin position="1"/>
        <end position="171"/>
    </location>
</feature>
<feature type="transmembrane region" description="Helical" evidence="2">
    <location>
        <begin position="21"/>
        <end position="41"/>
    </location>
</feature>
<feature type="transmembrane region" description="Helical" evidence="2">
    <location>
        <begin position="67"/>
        <end position="87"/>
    </location>
</feature>
<feature type="transmembrane region" description="Helical" evidence="2">
    <location>
        <begin position="96"/>
        <end position="116"/>
    </location>
</feature>
<feature type="transmembrane region" description="Helical" evidence="2">
    <location>
        <begin position="145"/>
        <end position="165"/>
    </location>
</feature>
<feature type="glycosylation site" description="N-linked (GlcNAc...) asparagine" evidence="3">
    <location>
        <position position="118"/>
    </location>
</feature>
<feature type="glycosylation site" description="N-linked (GlcNAc...) asparagine" evidence="3">
    <location>
        <position position="129"/>
    </location>
</feature>
<name>DMR16_CRYX8</name>
<comment type="function">
    <text evidence="4 7">Anthrone oxygenase; part of the gene cluster that mediates the biosynthesis of the dimeric xanthones cryptosporioptides (PubMed:30996871). The pathway begins with the synthesis of atrochrysone thioester by the polyketide synthase dmx-nrPKS (Probable). The atrochrysone carboxyl ACP thioesterase dmxR1 then breaks the thioester bond and releases the atrochrysone carboxylic acid from dmx-nrPKS (Probable). Atrochrysone carboxylic acid is decarboxylated by the decarboxylase dmxR15, and oxidized by the anthrone oxygenase dmxR16 to yield emodin (Probable). Emodin is then reduced to emodin hydroquinone by the oxidoreductase dmxR7 (Probable). A-ring reduction by the short chain dehydrogenase dmxR18, dehydration by the scytalone dehydratase-like protein dmxR17 and probable spontaneous re-oxidation, results in overall deoxygenation to chrysophanol (PubMed:30996871). Baeyer-Villiger oxidation by the Baeyer-Villiger monooxygenase (BVMO) dmxR6 then yields monodictylactone in equilibrium with monodictyphenone (PubMed:30996871). In the case of the cryptosporioptides biosynthesis, monodictylactone is reduced at C-12 to an alcohol (by the short chain dehydrogenases dmxR12 or dmxR8) and hydroxylated at C-5 by dmxR9, yielding the electron-rich aromatic which could eliminate H(2)O to form the ortho-quinonemethide, followed by tautomerisation to paraquinone and complete the formal reduction to produce the 10-methylgroup (Probable). Conjugate addition of C-4a-OH to the resulting paraquinone by the monooxygenase dmxR10 then gives cyclohexadienone, which is then reduced at C-5 by the short chain dehydrogenase dmxR3 to give the dihydroxanthone (Probable). The 6,7-epoxide in the cryptosporioptides could be introduced by the cytochrome P450 monooxygenase dmxL3 (Probable). The highly reducing PKS dmxL2 manufactures butyrate, which is further carboxylated by dmxL1 to form ethylmalonate (PubMed:30996871). It is not yet clear whether the carboxylation occurs while the butyrate is attached to the ACP of dmxL2, but this unusual fungal metabolite could then be esterified to O-5 by the O-acetyltransferase dmxR13 (PubMed:30996871). Finally, dimerization performed by dmxR5 gives the observed dimers cryptosporioptides A, B and C as the final products of the pathway (PubMed:30996871).</text>
</comment>
<comment type="catalytic activity">
    <reaction evidence="1">
        <text>emodin anthrone + O2 = emodin + H2O + H(+)</text>
        <dbReference type="Rhea" id="RHEA:64268"/>
        <dbReference type="ChEBI" id="CHEBI:15377"/>
        <dbReference type="ChEBI" id="CHEBI:15378"/>
        <dbReference type="ChEBI" id="CHEBI:15379"/>
        <dbReference type="ChEBI" id="CHEBI:77659"/>
        <dbReference type="ChEBI" id="CHEBI:150013"/>
    </reaction>
    <physiologicalReaction direction="left-to-right" evidence="1">
        <dbReference type="Rhea" id="RHEA:64269"/>
    </physiologicalReaction>
</comment>
<comment type="pathway">
    <text evidence="7">Secondary metabolite biosynthesis.</text>
</comment>
<comment type="subcellular location">
    <subcellularLocation>
        <location evidence="2">Membrane</location>
        <topology evidence="2">Multi-pass membrane protein</topology>
    </subcellularLocation>
</comment>
<comment type="similarity">
    <text evidence="6">Belongs to the anthrone oxygenase family.</text>
</comment>
<protein>
    <recommendedName>
        <fullName evidence="1">Anthrone oxygenase dmxR16</fullName>
        <ecNumber evidence="1">1.10.3.-</ecNumber>
    </recommendedName>
    <alternativeName>
        <fullName evidence="5">Dimeric xanthone biosynthesis cluster protein R16</fullName>
    </alternativeName>
</protein>
<evidence type="ECO:0000250" key="1">
    <source>
        <dbReference type="UniProtKB" id="P0DOB2"/>
    </source>
</evidence>
<evidence type="ECO:0000255" key="2"/>
<evidence type="ECO:0000255" key="3">
    <source>
        <dbReference type="PROSITE-ProRule" id="PRU00498"/>
    </source>
</evidence>
<evidence type="ECO:0000269" key="4">
    <source>
    </source>
</evidence>
<evidence type="ECO:0000303" key="5">
    <source>
    </source>
</evidence>
<evidence type="ECO:0000305" key="6"/>
<evidence type="ECO:0000305" key="7">
    <source>
    </source>
</evidence>
<keyword id="KW-0325">Glycoprotein</keyword>
<keyword id="KW-0472">Membrane</keyword>
<keyword id="KW-0503">Monooxygenase</keyword>
<keyword id="KW-0560">Oxidoreductase</keyword>
<keyword id="KW-0812">Transmembrane</keyword>
<keyword id="KW-1133">Transmembrane helix</keyword>
<dbReference type="EC" id="1.10.3.-" evidence="1"/>
<dbReference type="EMBL" id="MK182094">
    <property type="protein sequence ID" value="QCL09107.1"/>
    <property type="molecule type" value="Genomic_DNA"/>
</dbReference>
<dbReference type="SMR" id="A0A4P8DK01"/>
<dbReference type="GlyCosmos" id="A0A4P8DK01">
    <property type="glycosylation" value="2 sites, No reported glycans"/>
</dbReference>
<dbReference type="GO" id="GO:0016020">
    <property type="term" value="C:membrane"/>
    <property type="evidence" value="ECO:0007669"/>
    <property type="project" value="UniProtKB-SubCell"/>
</dbReference>
<dbReference type="GO" id="GO:0004497">
    <property type="term" value="F:monooxygenase activity"/>
    <property type="evidence" value="ECO:0007669"/>
    <property type="project" value="UniProtKB-KW"/>
</dbReference>
<dbReference type="InterPro" id="IPR013901">
    <property type="entry name" value="Anthrone_oxy"/>
</dbReference>
<dbReference type="PANTHER" id="PTHR35042">
    <property type="entry name" value="ANTHRONE OXYGENASE ENCC"/>
    <property type="match status" value="1"/>
</dbReference>
<dbReference type="PANTHER" id="PTHR35042:SF3">
    <property type="entry name" value="ANTHRONE OXYGENASE-RELATED"/>
    <property type="match status" value="1"/>
</dbReference>
<dbReference type="Pfam" id="PF08592">
    <property type="entry name" value="Anthrone_oxy"/>
    <property type="match status" value="1"/>
</dbReference>
<organism>
    <name type="scientific">Cryptosporiopsis sp. (strain 8999)</name>
    <dbReference type="NCBI Taxonomy" id="2572248"/>
    <lineage>
        <taxon>Eukaryota</taxon>
        <taxon>Fungi</taxon>
        <taxon>Dikarya</taxon>
        <taxon>Ascomycota</taxon>
        <taxon>Pezizomycotina</taxon>
        <taxon>Leotiomycetes</taxon>
        <taxon>Helotiales</taxon>
        <taxon>Dermateaceae</taxon>
        <taxon>Cryptosporiopsis</taxon>
    </lineage>
</organism>
<reference key="1">
    <citation type="journal article" date="2019" name="Chem. Sci.">
        <title>Structure revision of cryptosporioptides and determination of the genetic basis for dimeric xanthone biosynthesis in fungi.</title>
        <authorList>
            <person name="Greco C."/>
            <person name="de Mattos-Shipley K."/>
            <person name="Bailey A.M."/>
            <person name="Mulholland N.P."/>
            <person name="Vincent J.L."/>
            <person name="Willis C.L."/>
            <person name="Cox R.J."/>
            <person name="Simpson T.J."/>
        </authorList>
    </citation>
    <scope>NUCLEOTIDE SEQUENCE [GENOMIC DNA]</scope>
    <scope>FUNCTION</scope>
    <scope>PATHWAY</scope>
    <source>
        <strain>8999</strain>
    </source>
</reference>
<accession>A0A4P8DK01</accession>